<name>NRDR_SHEHH</name>
<accession>B0TJY6</accession>
<keyword id="KW-0067">ATP-binding</keyword>
<keyword id="KW-0238">DNA-binding</keyword>
<keyword id="KW-0479">Metal-binding</keyword>
<keyword id="KW-0547">Nucleotide-binding</keyword>
<keyword id="KW-0678">Repressor</keyword>
<keyword id="KW-0804">Transcription</keyword>
<keyword id="KW-0805">Transcription regulation</keyword>
<keyword id="KW-0862">Zinc</keyword>
<keyword id="KW-0863">Zinc-finger</keyword>
<protein>
    <recommendedName>
        <fullName evidence="1">Transcriptional repressor NrdR</fullName>
    </recommendedName>
</protein>
<proteinExistence type="inferred from homology"/>
<comment type="function">
    <text evidence="1">Negatively regulates transcription of bacterial ribonucleotide reductase nrd genes and operons by binding to NrdR-boxes.</text>
</comment>
<comment type="cofactor">
    <cofactor evidence="1">
        <name>Zn(2+)</name>
        <dbReference type="ChEBI" id="CHEBI:29105"/>
    </cofactor>
    <text evidence="1">Binds 1 zinc ion.</text>
</comment>
<comment type="similarity">
    <text evidence="1">Belongs to the NrdR family.</text>
</comment>
<feature type="chain" id="PRO_1000080825" description="Transcriptional repressor NrdR">
    <location>
        <begin position="1"/>
        <end position="149"/>
    </location>
</feature>
<feature type="domain" description="ATP-cone" evidence="1">
    <location>
        <begin position="49"/>
        <end position="139"/>
    </location>
</feature>
<feature type="zinc finger region" evidence="1">
    <location>
        <begin position="3"/>
        <end position="34"/>
    </location>
</feature>
<evidence type="ECO:0000255" key="1">
    <source>
        <dbReference type="HAMAP-Rule" id="MF_00440"/>
    </source>
</evidence>
<sequence>MHCPFCSATDTKVIDSRLVADGHQVRRRRECVQCHERFTTFEGAELVMPRVVKQDGSRQPFDEEKLRGGMLRAVEKRPVSMDQIEQALTKIKSTLRATGEREVKSEMIGNLMMDHLVNLDKVAYIRFASVYRAFEDVSEFGDAIAKLQK</sequence>
<gene>
    <name evidence="1" type="primary">nrdR</name>
    <name type="ordered locus">Shal_1204</name>
</gene>
<dbReference type="EMBL" id="CP000931">
    <property type="protein sequence ID" value="ABZ75773.1"/>
    <property type="molecule type" value="Genomic_DNA"/>
</dbReference>
<dbReference type="RefSeq" id="WP_012276315.1">
    <property type="nucleotide sequence ID" value="NC_010334.1"/>
</dbReference>
<dbReference type="SMR" id="B0TJY6"/>
<dbReference type="STRING" id="458817.Shal_1204"/>
<dbReference type="KEGG" id="shl:Shal_1204"/>
<dbReference type="eggNOG" id="COG1327">
    <property type="taxonomic scope" value="Bacteria"/>
</dbReference>
<dbReference type="HOGENOM" id="CLU_108412_0_0_6"/>
<dbReference type="OrthoDB" id="9807461at2"/>
<dbReference type="Proteomes" id="UP000001317">
    <property type="component" value="Chromosome"/>
</dbReference>
<dbReference type="GO" id="GO:0005524">
    <property type="term" value="F:ATP binding"/>
    <property type="evidence" value="ECO:0007669"/>
    <property type="project" value="UniProtKB-KW"/>
</dbReference>
<dbReference type="GO" id="GO:0003677">
    <property type="term" value="F:DNA binding"/>
    <property type="evidence" value="ECO:0007669"/>
    <property type="project" value="UniProtKB-KW"/>
</dbReference>
<dbReference type="GO" id="GO:0008270">
    <property type="term" value="F:zinc ion binding"/>
    <property type="evidence" value="ECO:0007669"/>
    <property type="project" value="UniProtKB-UniRule"/>
</dbReference>
<dbReference type="GO" id="GO:0045892">
    <property type="term" value="P:negative regulation of DNA-templated transcription"/>
    <property type="evidence" value="ECO:0007669"/>
    <property type="project" value="UniProtKB-UniRule"/>
</dbReference>
<dbReference type="HAMAP" id="MF_00440">
    <property type="entry name" value="NrdR"/>
    <property type="match status" value="1"/>
</dbReference>
<dbReference type="InterPro" id="IPR005144">
    <property type="entry name" value="ATP-cone_dom"/>
</dbReference>
<dbReference type="InterPro" id="IPR055173">
    <property type="entry name" value="NrdR-like_N"/>
</dbReference>
<dbReference type="InterPro" id="IPR003796">
    <property type="entry name" value="RNR_NrdR-like"/>
</dbReference>
<dbReference type="NCBIfam" id="TIGR00244">
    <property type="entry name" value="transcriptional regulator NrdR"/>
    <property type="match status" value="1"/>
</dbReference>
<dbReference type="PANTHER" id="PTHR30455">
    <property type="entry name" value="TRANSCRIPTIONAL REPRESSOR NRDR"/>
    <property type="match status" value="1"/>
</dbReference>
<dbReference type="PANTHER" id="PTHR30455:SF2">
    <property type="entry name" value="TRANSCRIPTIONAL REPRESSOR NRDR"/>
    <property type="match status" value="1"/>
</dbReference>
<dbReference type="Pfam" id="PF03477">
    <property type="entry name" value="ATP-cone"/>
    <property type="match status" value="1"/>
</dbReference>
<dbReference type="Pfam" id="PF22811">
    <property type="entry name" value="Zn_ribbon_NrdR"/>
    <property type="match status" value="1"/>
</dbReference>
<dbReference type="PROSITE" id="PS51161">
    <property type="entry name" value="ATP_CONE"/>
    <property type="match status" value="1"/>
</dbReference>
<organism>
    <name type="scientific">Shewanella halifaxensis (strain HAW-EB4)</name>
    <dbReference type="NCBI Taxonomy" id="458817"/>
    <lineage>
        <taxon>Bacteria</taxon>
        <taxon>Pseudomonadati</taxon>
        <taxon>Pseudomonadota</taxon>
        <taxon>Gammaproteobacteria</taxon>
        <taxon>Alteromonadales</taxon>
        <taxon>Shewanellaceae</taxon>
        <taxon>Shewanella</taxon>
    </lineage>
</organism>
<reference key="1">
    <citation type="submission" date="2008-01" db="EMBL/GenBank/DDBJ databases">
        <title>Complete sequence of Shewanella halifaxensis HAW-EB4.</title>
        <authorList>
            <consortium name="US DOE Joint Genome Institute"/>
            <person name="Copeland A."/>
            <person name="Lucas S."/>
            <person name="Lapidus A."/>
            <person name="Glavina del Rio T."/>
            <person name="Dalin E."/>
            <person name="Tice H."/>
            <person name="Bruce D."/>
            <person name="Goodwin L."/>
            <person name="Pitluck S."/>
            <person name="Sims D."/>
            <person name="Brettin T."/>
            <person name="Detter J.C."/>
            <person name="Han C."/>
            <person name="Kuske C.R."/>
            <person name="Schmutz J."/>
            <person name="Larimer F."/>
            <person name="Land M."/>
            <person name="Hauser L."/>
            <person name="Kyrpides N."/>
            <person name="Kim E."/>
            <person name="Zhao J.-S."/>
            <person name="Richardson P."/>
        </authorList>
    </citation>
    <scope>NUCLEOTIDE SEQUENCE [LARGE SCALE GENOMIC DNA]</scope>
    <source>
        <strain>HAW-EB4</strain>
    </source>
</reference>